<reference key="1">
    <citation type="journal article" date="2002" name="Nature">
        <title>Genome sequence of the plant pathogen Ralstonia solanacearum.</title>
        <authorList>
            <person name="Salanoubat M."/>
            <person name="Genin S."/>
            <person name="Artiguenave F."/>
            <person name="Gouzy J."/>
            <person name="Mangenot S."/>
            <person name="Arlat M."/>
            <person name="Billault A."/>
            <person name="Brottier P."/>
            <person name="Camus J.-C."/>
            <person name="Cattolico L."/>
            <person name="Chandler M."/>
            <person name="Choisne N."/>
            <person name="Claudel-Renard C."/>
            <person name="Cunnac S."/>
            <person name="Demange N."/>
            <person name="Gaspin C."/>
            <person name="Lavie M."/>
            <person name="Moisan A."/>
            <person name="Robert C."/>
            <person name="Saurin W."/>
            <person name="Schiex T."/>
            <person name="Siguier P."/>
            <person name="Thebault P."/>
            <person name="Whalen M."/>
            <person name="Wincker P."/>
            <person name="Levy M."/>
            <person name="Weissenbach J."/>
            <person name="Boucher C.A."/>
        </authorList>
    </citation>
    <scope>NUCLEOTIDE SEQUENCE [LARGE SCALE GENOMIC DNA]</scope>
    <source>
        <strain>ATCC BAA-1114 / GMI1000</strain>
    </source>
</reference>
<gene>
    <name evidence="1" type="primary">hrcA</name>
    <name type="ordered locus">RSc2649</name>
    <name type="ORF">RS04567</name>
</gene>
<protein>
    <recommendedName>
        <fullName evidence="1">Heat-inducible transcription repressor HrcA</fullName>
    </recommendedName>
</protein>
<evidence type="ECO:0000255" key="1">
    <source>
        <dbReference type="HAMAP-Rule" id="MF_00081"/>
    </source>
</evidence>
<keyword id="KW-1185">Reference proteome</keyword>
<keyword id="KW-0678">Repressor</keyword>
<keyword id="KW-0346">Stress response</keyword>
<keyword id="KW-0804">Transcription</keyword>
<keyword id="KW-0805">Transcription regulation</keyword>
<dbReference type="EMBL" id="AL646052">
    <property type="protein sequence ID" value="CAD16356.1"/>
    <property type="molecule type" value="Genomic_DNA"/>
</dbReference>
<dbReference type="RefSeq" id="WP_011002559.1">
    <property type="nucleotide sequence ID" value="NC_003295.1"/>
</dbReference>
<dbReference type="SMR" id="Q8XW26"/>
<dbReference type="STRING" id="267608.RSc2649"/>
<dbReference type="EnsemblBacteria" id="CAD16356">
    <property type="protein sequence ID" value="CAD16356"/>
    <property type="gene ID" value="RSc2649"/>
</dbReference>
<dbReference type="KEGG" id="rso:RSc2649"/>
<dbReference type="eggNOG" id="COG1420">
    <property type="taxonomic scope" value="Bacteria"/>
</dbReference>
<dbReference type="HOGENOM" id="CLU_050019_0_0_4"/>
<dbReference type="Proteomes" id="UP000001436">
    <property type="component" value="Chromosome"/>
</dbReference>
<dbReference type="GO" id="GO:0003677">
    <property type="term" value="F:DNA binding"/>
    <property type="evidence" value="ECO:0007669"/>
    <property type="project" value="InterPro"/>
</dbReference>
<dbReference type="GO" id="GO:0045892">
    <property type="term" value="P:negative regulation of DNA-templated transcription"/>
    <property type="evidence" value="ECO:0007669"/>
    <property type="project" value="UniProtKB-UniRule"/>
</dbReference>
<dbReference type="Gene3D" id="3.30.450.40">
    <property type="match status" value="1"/>
</dbReference>
<dbReference type="Gene3D" id="1.10.10.10">
    <property type="entry name" value="Winged helix-like DNA-binding domain superfamily/Winged helix DNA-binding domain"/>
    <property type="match status" value="1"/>
</dbReference>
<dbReference type="HAMAP" id="MF_00081">
    <property type="entry name" value="HrcA"/>
    <property type="match status" value="1"/>
</dbReference>
<dbReference type="InterPro" id="IPR029016">
    <property type="entry name" value="GAF-like_dom_sf"/>
</dbReference>
<dbReference type="InterPro" id="IPR002571">
    <property type="entry name" value="HrcA"/>
</dbReference>
<dbReference type="InterPro" id="IPR021153">
    <property type="entry name" value="HrcA_C"/>
</dbReference>
<dbReference type="InterPro" id="IPR036388">
    <property type="entry name" value="WH-like_DNA-bd_sf"/>
</dbReference>
<dbReference type="InterPro" id="IPR036390">
    <property type="entry name" value="WH_DNA-bd_sf"/>
</dbReference>
<dbReference type="NCBIfam" id="TIGR00331">
    <property type="entry name" value="hrcA"/>
    <property type="match status" value="1"/>
</dbReference>
<dbReference type="PANTHER" id="PTHR34824">
    <property type="entry name" value="HEAT-INDUCIBLE TRANSCRIPTION REPRESSOR HRCA"/>
    <property type="match status" value="1"/>
</dbReference>
<dbReference type="PANTHER" id="PTHR34824:SF1">
    <property type="entry name" value="HEAT-INDUCIBLE TRANSCRIPTION REPRESSOR HRCA"/>
    <property type="match status" value="1"/>
</dbReference>
<dbReference type="Pfam" id="PF01628">
    <property type="entry name" value="HrcA"/>
    <property type="match status" value="1"/>
</dbReference>
<dbReference type="PIRSF" id="PIRSF005485">
    <property type="entry name" value="HrcA"/>
    <property type="match status" value="1"/>
</dbReference>
<dbReference type="SUPFAM" id="SSF55781">
    <property type="entry name" value="GAF domain-like"/>
    <property type="match status" value="1"/>
</dbReference>
<dbReference type="SUPFAM" id="SSF46785">
    <property type="entry name" value="Winged helix' DNA-binding domain"/>
    <property type="match status" value="1"/>
</dbReference>
<proteinExistence type="inferred from homology"/>
<organism>
    <name type="scientific">Ralstonia nicotianae (strain ATCC BAA-1114 / GMI1000)</name>
    <name type="common">Ralstonia solanacearum</name>
    <dbReference type="NCBI Taxonomy" id="267608"/>
    <lineage>
        <taxon>Bacteria</taxon>
        <taxon>Pseudomonadati</taxon>
        <taxon>Pseudomonadota</taxon>
        <taxon>Betaproteobacteria</taxon>
        <taxon>Burkholderiales</taxon>
        <taxon>Burkholderiaceae</taxon>
        <taxon>Ralstonia</taxon>
        <taxon>Ralstonia solanacearum species complex</taxon>
    </lineage>
</organism>
<feature type="chain" id="PRO_0000182521" description="Heat-inducible transcription repressor HrcA">
    <location>
        <begin position="1"/>
        <end position="352"/>
    </location>
</feature>
<sequence length="352" mass="38376">MDKRATILLKTLIERYIAEGQPVGSRTLSKYSGLDLSPATIRNVMSDLEEMGFIASPHTSAGRVPTPRGYRLFVDTMLTAGPLDILGMHDRMAQQIAGTIAEQVRAQLASHGSESSQRVIAAAAQTLSNLSQFAGIVMTPRRTHAFRQIEFLRLSETRILLIVVTPEGDVQNRIIHTDTPYTPSQLVEAANYINAHYGGMTFDAVRERLRGELNALQADMTSLMQAAVEAGSSAVSDEDPVVISGERKLLEVEDLSSSMDKLRRLFAVFEQKTGLLQLLDVSSRAEGVQIFIGGESSLVPHEDMAVITAPYEVDGKIVGTLGVIGPMRMAYERVIPIVDITAKLLSSTLSQH</sequence>
<accession>Q8XW26</accession>
<comment type="function">
    <text evidence="1">Negative regulator of class I heat shock genes (grpE-dnaK-dnaJ and groELS operons). Prevents heat-shock induction of these operons.</text>
</comment>
<comment type="similarity">
    <text evidence="1">Belongs to the HrcA family.</text>
</comment>
<name>HRCA_RALN1</name>